<dbReference type="EC" id="3.6.5.-" evidence="1"/>
<dbReference type="EMBL" id="CP001144">
    <property type="protein sequence ID" value="ACH74858.1"/>
    <property type="molecule type" value="Genomic_DNA"/>
</dbReference>
<dbReference type="SMR" id="B5FIN3"/>
<dbReference type="KEGG" id="sed:SeD_A3660"/>
<dbReference type="HOGENOM" id="CLU_011747_2_0_6"/>
<dbReference type="Proteomes" id="UP000008322">
    <property type="component" value="Chromosome"/>
</dbReference>
<dbReference type="GO" id="GO:0005737">
    <property type="term" value="C:cytoplasm"/>
    <property type="evidence" value="ECO:0007669"/>
    <property type="project" value="UniProtKB-SubCell"/>
</dbReference>
<dbReference type="GO" id="GO:0005525">
    <property type="term" value="F:GTP binding"/>
    <property type="evidence" value="ECO:0007669"/>
    <property type="project" value="UniProtKB-UniRule"/>
</dbReference>
<dbReference type="GO" id="GO:0003924">
    <property type="term" value="F:GTPase activity"/>
    <property type="evidence" value="ECO:0007669"/>
    <property type="project" value="UniProtKB-UniRule"/>
</dbReference>
<dbReference type="GO" id="GO:0000287">
    <property type="term" value="F:magnesium ion binding"/>
    <property type="evidence" value="ECO:0007669"/>
    <property type="project" value="InterPro"/>
</dbReference>
<dbReference type="GO" id="GO:0042254">
    <property type="term" value="P:ribosome biogenesis"/>
    <property type="evidence" value="ECO:0007669"/>
    <property type="project" value="UniProtKB-UniRule"/>
</dbReference>
<dbReference type="CDD" id="cd01898">
    <property type="entry name" value="Obg"/>
    <property type="match status" value="1"/>
</dbReference>
<dbReference type="FunFam" id="2.70.210.12:FF:000001">
    <property type="entry name" value="GTPase Obg"/>
    <property type="match status" value="1"/>
</dbReference>
<dbReference type="FunFam" id="3.40.50.300:FF:000185">
    <property type="entry name" value="GTPase Obg"/>
    <property type="match status" value="1"/>
</dbReference>
<dbReference type="Gene3D" id="2.70.210.12">
    <property type="entry name" value="GTP1/OBG domain"/>
    <property type="match status" value="1"/>
</dbReference>
<dbReference type="Gene3D" id="3.40.50.300">
    <property type="entry name" value="P-loop containing nucleotide triphosphate hydrolases"/>
    <property type="match status" value="1"/>
</dbReference>
<dbReference type="HAMAP" id="MF_01454">
    <property type="entry name" value="GTPase_Obg"/>
    <property type="match status" value="1"/>
</dbReference>
<dbReference type="InterPro" id="IPR031167">
    <property type="entry name" value="G_OBG"/>
</dbReference>
<dbReference type="InterPro" id="IPR006073">
    <property type="entry name" value="GTP-bd"/>
</dbReference>
<dbReference type="InterPro" id="IPR014100">
    <property type="entry name" value="GTP-bd_Obg/CgtA"/>
</dbReference>
<dbReference type="InterPro" id="IPR006074">
    <property type="entry name" value="GTP1-OBG_CS"/>
</dbReference>
<dbReference type="InterPro" id="IPR006169">
    <property type="entry name" value="GTP1_OBG_dom"/>
</dbReference>
<dbReference type="InterPro" id="IPR036726">
    <property type="entry name" value="GTP1_OBG_dom_sf"/>
</dbReference>
<dbReference type="InterPro" id="IPR045086">
    <property type="entry name" value="OBG_GTPase"/>
</dbReference>
<dbReference type="InterPro" id="IPR027417">
    <property type="entry name" value="P-loop_NTPase"/>
</dbReference>
<dbReference type="NCBIfam" id="TIGR02729">
    <property type="entry name" value="Obg_CgtA"/>
    <property type="match status" value="1"/>
</dbReference>
<dbReference type="NCBIfam" id="NF008955">
    <property type="entry name" value="PRK12297.1"/>
    <property type="match status" value="1"/>
</dbReference>
<dbReference type="NCBIfam" id="NF008956">
    <property type="entry name" value="PRK12299.1"/>
    <property type="match status" value="1"/>
</dbReference>
<dbReference type="PANTHER" id="PTHR11702">
    <property type="entry name" value="DEVELOPMENTALLY REGULATED GTP-BINDING PROTEIN-RELATED"/>
    <property type="match status" value="1"/>
</dbReference>
<dbReference type="PANTHER" id="PTHR11702:SF31">
    <property type="entry name" value="MITOCHONDRIAL RIBOSOME-ASSOCIATED GTPASE 2"/>
    <property type="match status" value="1"/>
</dbReference>
<dbReference type="Pfam" id="PF01018">
    <property type="entry name" value="GTP1_OBG"/>
    <property type="match status" value="1"/>
</dbReference>
<dbReference type="Pfam" id="PF01926">
    <property type="entry name" value="MMR_HSR1"/>
    <property type="match status" value="1"/>
</dbReference>
<dbReference type="PIRSF" id="PIRSF002401">
    <property type="entry name" value="GTP_bd_Obg/CgtA"/>
    <property type="match status" value="1"/>
</dbReference>
<dbReference type="PRINTS" id="PR00326">
    <property type="entry name" value="GTP1OBG"/>
</dbReference>
<dbReference type="SUPFAM" id="SSF82051">
    <property type="entry name" value="Obg GTP-binding protein N-terminal domain"/>
    <property type="match status" value="1"/>
</dbReference>
<dbReference type="SUPFAM" id="SSF52540">
    <property type="entry name" value="P-loop containing nucleoside triphosphate hydrolases"/>
    <property type="match status" value="1"/>
</dbReference>
<dbReference type="PROSITE" id="PS51710">
    <property type="entry name" value="G_OBG"/>
    <property type="match status" value="1"/>
</dbReference>
<dbReference type="PROSITE" id="PS00905">
    <property type="entry name" value="GTP1_OBG"/>
    <property type="match status" value="1"/>
</dbReference>
<dbReference type="PROSITE" id="PS51883">
    <property type="entry name" value="OBG"/>
    <property type="match status" value="1"/>
</dbReference>
<sequence>MKFVDEASILVVAGDGGNGCVSFRREKYIPKGGPDGGDGGDGGDVWMEADENLNTLIDYRFEKSFRAERGQNGASRDCTGKRGKDVTIKVPVGTRVIDQGTGETMGDMTKHGQRLLVAKGGWHGLGNTRFKSSVNRTPRQKTNGTPGDKRDLLLELMLLADVGMLGMPNAGKSTFIRAVSAAKPKVADYPFTTLVPSLGVVRMDSEKSFVVADIPGLIEGAAEGAGLGIRFLKHLERCRVLLHLIDIDPIDGSDPVENARIIIGELEKYSQDLAAKPRWLVFNKIDLMDKTEAEEKAKAIAEALGWEGKYYLISAASQLGVKDLCWDVMTFIIENPIAQAEEAKQPEKVEFMWDDYHRQQLAEVEEDADDDWDDDWDEDDEEGVEFIYKR</sequence>
<gene>
    <name evidence="1" type="primary">obg</name>
    <name type="ordered locus">SeD_A3660</name>
</gene>
<accession>B5FIN3</accession>
<proteinExistence type="inferred from homology"/>
<evidence type="ECO:0000255" key="1">
    <source>
        <dbReference type="HAMAP-Rule" id="MF_01454"/>
    </source>
</evidence>
<evidence type="ECO:0000255" key="2">
    <source>
        <dbReference type="PROSITE-ProRule" id="PRU01231"/>
    </source>
</evidence>
<evidence type="ECO:0000256" key="3">
    <source>
        <dbReference type="SAM" id="MobiDB-lite"/>
    </source>
</evidence>
<reference key="1">
    <citation type="journal article" date="2011" name="J. Bacteriol.">
        <title>Comparative genomics of 28 Salmonella enterica isolates: evidence for CRISPR-mediated adaptive sublineage evolution.</title>
        <authorList>
            <person name="Fricke W.F."/>
            <person name="Mammel M.K."/>
            <person name="McDermott P.F."/>
            <person name="Tartera C."/>
            <person name="White D.G."/>
            <person name="Leclerc J.E."/>
            <person name="Ravel J."/>
            <person name="Cebula T.A."/>
        </authorList>
    </citation>
    <scope>NUCLEOTIDE SEQUENCE [LARGE SCALE GENOMIC DNA]</scope>
    <source>
        <strain>CT_02021853</strain>
    </source>
</reference>
<protein>
    <recommendedName>
        <fullName evidence="1">GTPase Obg</fullName>
        <ecNumber evidence="1">3.6.5.-</ecNumber>
    </recommendedName>
    <alternativeName>
        <fullName evidence="1">GTP-binding protein Obg</fullName>
    </alternativeName>
</protein>
<feature type="chain" id="PRO_0000386222" description="GTPase Obg">
    <location>
        <begin position="1"/>
        <end position="390"/>
    </location>
</feature>
<feature type="domain" description="Obg" evidence="2">
    <location>
        <begin position="1"/>
        <end position="159"/>
    </location>
</feature>
<feature type="domain" description="OBG-type G" evidence="1">
    <location>
        <begin position="160"/>
        <end position="333"/>
    </location>
</feature>
<feature type="region of interest" description="Disordered" evidence="3">
    <location>
        <begin position="127"/>
        <end position="147"/>
    </location>
</feature>
<feature type="compositionally biased region" description="Polar residues" evidence="3">
    <location>
        <begin position="129"/>
        <end position="145"/>
    </location>
</feature>
<feature type="binding site" evidence="1">
    <location>
        <begin position="166"/>
        <end position="173"/>
    </location>
    <ligand>
        <name>GTP</name>
        <dbReference type="ChEBI" id="CHEBI:37565"/>
    </ligand>
</feature>
<feature type="binding site" evidence="1">
    <location>
        <position position="173"/>
    </location>
    <ligand>
        <name>Mg(2+)</name>
        <dbReference type="ChEBI" id="CHEBI:18420"/>
    </ligand>
</feature>
<feature type="binding site" evidence="1">
    <location>
        <begin position="191"/>
        <end position="195"/>
    </location>
    <ligand>
        <name>GTP</name>
        <dbReference type="ChEBI" id="CHEBI:37565"/>
    </ligand>
</feature>
<feature type="binding site" evidence="1">
    <location>
        <position position="193"/>
    </location>
    <ligand>
        <name>Mg(2+)</name>
        <dbReference type="ChEBI" id="CHEBI:18420"/>
    </ligand>
</feature>
<feature type="binding site" evidence="1">
    <location>
        <begin position="213"/>
        <end position="216"/>
    </location>
    <ligand>
        <name>GTP</name>
        <dbReference type="ChEBI" id="CHEBI:37565"/>
    </ligand>
</feature>
<feature type="binding site" evidence="1">
    <location>
        <begin position="283"/>
        <end position="286"/>
    </location>
    <ligand>
        <name>GTP</name>
        <dbReference type="ChEBI" id="CHEBI:37565"/>
    </ligand>
</feature>
<feature type="binding site" evidence="1">
    <location>
        <begin position="314"/>
        <end position="316"/>
    </location>
    <ligand>
        <name>GTP</name>
        <dbReference type="ChEBI" id="CHEBI:37565"/>
    </ligand>
</feature>
<keyword id="KW-0963">Cytoplasm</keyword>
<keyword id="KW-0342">GTP-binding</keyword>
<keyword id="KW-0378">Hydrolase</keyword>
<keyword id="KW-0460">Magnesium</keyword>
<keyword id="KW-0479">Metal-binding</keyword>
<keyword id="KW-0547">Nucleotide-binding</keyword>
<name>OBG_SALDC</name>
<comment type="function">
    <text evidence="1">An essential GTPase which binds GTP, GDP and possibly (p)ppGpp with moderate affinity, with high nucleotide exchange rates and a fairly low GTP hydrolysis rate. Plays a role in control of the cell cycle, stress response, ribosome biogenesis and in those bacteria that undergo differentiation, in morphogenesis control.</text>
</comment>
<comment type="cofactor">
    <cofactor evidence="1">
        <name>Mg(2+)</name>
        <dbReference type="ChEBI" id="CHEBI:18420"/>
    </cofactor>
</comment>
<comment type="subunit">
    <text evidence="1">Monomer.</text>
</comment>
<comment type="subcellular location">
    <subcellularLocation>
        <location evidence="1">Cytoplasm</location>
    </subcellularLocation>
</comment>
<comment type="similarity">
    <text evidence="1">Belongs to the TRAFAC class OBG-HflX-like GTPase superfamily. OBG GTPase family.</text>
</comment>
<organism>
    <name type="scientific">Salmonella dublin (strain CT_02021853)</name>
    <dbReference type="NCBI Taxonomy" id="439851"/>
    <lineage>
        <taxon>Bacteria</taxon>
        <taxon>Pseudomonadati</taxon>
        <taxon>Pseudomonadota</taxon>
        <taxon>Gammaproteobacteria</taxon>
        <taxon>Enterobacterales</taxon>
        <taxon>Enterobacteriaceae</taxon>
        <taxon>Salmonella</taxon>
    </lineage>
</organism>